<keyword id="KW-0456">Lyase</keyword>
<keyword id="KW-1185">Reference proteome</keyword>
<feature type="chain" id="PRO_1000050430" description="Putative pterin-4-alpha-carbinolamine dehydratase">
    <location>
        <begin position="1"/>
        <end position="96"/>
    </location>
</feature>
<name>PHS_BRUA4</name>
<sequence>MARNRLTENELNEALTELDGWQKVDGREAIAKSFKFKDFNAAFGFMTRAALHAEKLDHHPEWFNVYNRVDVTLATHSENGITELDIKLARKMNAIA</sequence>
<accession>A6WV21</accession>
<organism>
    <name type="scientific">Brucella anthropi (strain ATCC 49188 / DSM 6882 / CCUG 24695 / JCM 21032 / LMG 3331 / NBRC 15819 / NCTC 12168 / Alc 37)</name>
    <name type="common">Ochrobactrum anthropi</name>
    <dbReference type="NCBI Taxonomy" id="439375"/>
    <lineage>
        <taxon>Bacteria</taxon>
        <taxon>Pseudomonadati</taxon>
        <taxon>Pseudomonadota</taxon>
        <taxon>Alphaproteobacteria</taxon>
        <taxon>Hyphomicrobiales</taxon>
        <taxon>Brucellaceae</taxon>
        <taxon>Brucella/Ochrobactrum group</taxon>
        <taxon>Brucella</taxon>
    </lineage>
</organism>
<dbReference type="EC" id="4.2.1.96" evidence="1"/>
<dbReference type="EMBL" id="CP000758">
    <property type="protein sequence ID" value="ABS12825.1"/>
    <property type="molecule type" value="Genomic_DNA"/>
</dbReference>
<dbReference type="RefSeq" id="WP_010657898.1">
    <property type="nucleotide sequence ID" value="NC_009667.1"/>
</dbReference>
<dbReference type="SMR" id="A6WV21"/>
<dbReference type="STRING" id="439375.Oant_0094"/>
<dbReference type="KEGG" id="oan:Oant_0094"/>
<dbReference type="eggNOG" id="COG2154">
    <property type="taxonomic scope" value="Bacteria"/>
</dbReference>
<dbReference type="HOGENOM" id="CLU_081974_3_2_5"/>
<dbReference type="Proteomes" id="UP000002301">
    <property type="component" value="Chromosome 1"/>
</dbReference>
<dbReference type="GO" id="GO:0008124">
    <property type="term" value="F:4-alpha-hydroxytetrahydrobiopterin dehydratase activity"/>
    <property type="evidence" value="ECO:0007669"/>
    <property type="project" value="UniProtKB-UniRule"/>
</dbReference>
<dbReference type="GO" id="GO:0006729">
    <property type="term" value="P:tetrahydrobiopterin biosynthetic process"/>
    <property type="evidence" value="ECO:0007669"/>
    <property type="project" value="InterPro"/>
</dbReference>
<dbReference type="CDD" id="cd00914">
    <property type="entry name" value="PCD_DCoH_subfamily_b"/>
    <property type="match status" value="1"/>
</dbReference>
<dbReference type="Gene3D" id="3.30.1360.20">
    <property type="entry name" value="Transcriptional coactivator/pterin dehydratase"/>
    <property type="match status" value="1"/>
</dbReference>
<dbReference type="HAMAP" id="MF_00434">
    <property type="entry name" value="Pterin_4_alpha"/>
    <property type="match status" value="1"/>
</dbReference>
<dbReference type="InterPro" id="IPR036428">
    <property type="entry name" value="PCD_sf"/>
</dbReference>
<dbReference type="InterPro" id="IPR001533">
    <property type="entry name" value="Pterin_deHydtase"/>
</dbReference>
<dbReference type="NCBIfam" id="NF002017">
    <property type="entry name" value="PRK00823.1-2"/>
    <property type="match status" value="1"/>
</dbReference>
<dbReference type="NCBIfam" id="NF002018">
    <property type="entry name" value="PRK00823.1-3"/>
    <property type="match status" value="1"/>
</dbReference>
<dbReference type="NCBIfam" id="NF002020">
    <property type="entry name" value="PRK00823.1-5"/>
    <property type="match status" value="1"/>
</dbReference>
<dbReference type="PANTHER" id="PTHR12599">
    <property type="entry name" value="PTERIN-4-ALPHA-CARBINOLAMINE DEHYDRATASE"/>
    <property type="match status" value="1"/>
</dbReference>
<dbReference type="PANTHER" id="PTHR12599:SF0">
    <property type="entry name" value="PTERIN-4-ALPHA-CARBINOLAMINE DEHYDRATASE"/>
    <property type="match status" value="1"/>
</dbReference>
<dbReference type="Pfam" id="PF01329">
    <property type="entry name" value="Pterin_4a"/>
    <property type="match status" value="1"/>
</dbReference>
<dbReference type="SUPFAM" id="SSF55248">
    <property type="entry name" value="PCD-like"/>
    <property type="match status" value="1"/>
</dbReference>
<evidence type="ECO:0000255" key="1">
    <source>
        <dbReference type="HAMAP-Rule" id="MF_00434"/>
    </source>
</evidence>
<proteinExistence type="inferred from homology"/>
<reference key="1">
    <citation type="journal article" date="2011" name="J. Bacteriol.">
        <title>Genome of Ochrobactrum anthropi ATCC 49188 T, a versatile opportunistic pathogen and symbiont of several eukaryotic hosts.</title>
        <authorList>
            <person name="Chain P.S."/>
            <person name="Lang D.M."/>
            <person name="Comerci D.J."/>
            <person name="Malfatti S.A."/>
            <person name="Vergez L.M."/>
            <person name="Shin M."/>
            <person name="Ugalde R.A."/>
            <person name="Garcia E."/>
            <person name="Tolmasky M.E."/>
        </authorList>
    </citation>
    <scope>NUCLEOTIDE SEQUENCE [LARGE SCALE GENOMIC DNA]</scope>
    <source>
        <strain>ATCC 49188 / DSM 6882 / CCUG 24695 / JCM 21032 / LMG 3331 / NBRC 15819 / NCTC 12168 / Alc 37</strain>
    </source>
</reference>
<gene>
    <name type="ordered locus">Oant_0094</name>
</gene>
<protein>
    <recommendedName>
        <fullName evidence="1">Putative pterin-4-alpha-carbinolamine dehydratase</fullName>
        <shortName evidence="1">PHS</shortName>
        <ecNumber evidence="1">4.2.1.96</ecNumber>
    </recommendedName>
    <alternativeName>
        <fullName evidence="1">4-alpha-hydroxy-tetrahydropterin dehydratase</fullName>
    </alternativeName>
    <alternativeName>
        <fullName evidence="1">Pterin carbinolamine dehydratase</fullName>
        <shortName evidence="1">PCD</shortName>
    </alternativeName>
</protein>
<comment type="catalytic activity">
    <reaction evidence="1">
        <text>(4aS,6R)-4a-hydroxy-L-erythro-5,6,7,8-tetrahydrobiopterin = (6R)-L-erythro-6,7-dihydrobiopterin + H2O</text>
        <dbReference type="Rhea" id="RHEA:11920"/>
        <dbReference type="ChEBI" id="CHEBI:15377"/>
        <dbReference type="ChEBI" id="CHEBI:15642"/>
        <dbReference type="ChEBI" id="CHEBI:43120"/>
        <dbReference type="EC" id="4.2.1.96"/>
    </reaction>
</comment>
<comment type="similarity">
    <text evidence="1">Belongs to the pterin-4-alpha-carbinolamine dehydratase family.</text>
</comment>